<organism>
    <name type="scientific">Pseudomonas paraeruginosa (strain DSM 24068 / PA7)</name>
    <name type="common">Pseudomonas aeruginosa (strain PA7)</name>
    <dbReference type="NCBI Taxonomy" id="381754"/>
    <lineage>
        <taxon>Bacteria</taxon>
        <taxon>Pseudomonadati</taxon>
        <taxon>Pseudomonadota</taxon>
        <taxon>Gammaproteobacteria</taxon>
        <taxon>Pseudomonadales</taxon>
        <taxon>Pseudomonadaceae</taxon>
        <taxon>Pseudomonas</taxon>
        <taxon>Pseudomonas paraeruginosa</taxon>
    </lineage>
</organism>
<comment type="function">
    <text evidence="1">One of the primary rRNA binding proteins, it binds directly near the 3'-end of the 23S rRNA, where it nucleates assembly of the 50S subunit.</text>
</comment>
<comment type="subunit">
    <text evidence="1">Part of the 50S ribosomal subunit. Forms a cluster with proteins L14 and L19.</text>
</comment>
<comment type="PTM">
    <text evidence="1">Methylated by PrmB.</text>
</comment>
<comment type="similarity">
    <text evidence="1">Belongs to the universal ribosomal protein uL3 family.</text>
</comment>
<protein>
    <recommendedName>
        <fullName evidence="1">Large ribosomal subunit protein uL3</fullName>
    </recommendedName>
    <alternativeName>
        <fullName evidence="2">50S ribosomal protein L3</fullName>
    </alternativeName>
</protein>
<feature type="chain" id="PRO_1000052112" description="Large ribosomal subunit protein uL3">
    <location>
        <begin position="1"/>
        <end position="211"/>
    </location>
</feature>
<feature type="modified residue" description="N5-methylglutamine" evidence="1">
    <location>
        <position position="150"/>
    </location>
</feature>
<gene>
    <name evidence="1" type="primary">rplC</name>
    <name type="ordered locus">PSPA7_0837</name>
</gene>
<dbReference type="EMBL" id="CP000744">
    <property type="protein sequence ID" value="ABR86806.1"/>
    <property type="molecule type" value="Genomic_DNA"/>
</dbReference>
<dbReference type="RefSeq" id="WP_003103877.1">
    <property type="nucleotide sequence ID" value="NC_009656.1"/>
</dbReference>
<dbReference type="SMR" id="A6UZI8"/>
<dbReference type="GeneID" id="77219198"/>
<dbReference type="KEGG" id="pap:PSPA7_0837"/>
<dbReference type="HOGENOM" id="CLU_044142_4_1_6"/>
<dbReference type="Proteomes" id="UP000001582">
    <property type="component" value="Chromosome"/>
</dbReference>
<dbReference type="GO" id="GO:0022625">
    <property type="term" value="C:cytosolic large ribosomal subunit"/>
    <property type="evidence" value="ECO:0007669"/>
    <property type="project" value="TreeGrafter"/>
</dbReference>
<dbReference type="GO" id="GO:0019843">
    <property type="term" value="F:rRNA binding"/>
    <property type="evidence" value="ECO:0007669"/>
    <property type="project" value="UniProtKB-UniRule"/>
</dbReference>
<dbReference type="GO" id="GO:0003735">
    <property type="term" value="F:structural constituent of ribosome"/>
    <property type="evidence" value="ECO:0007669"/>
    <property type="project" value="InterPro"/>
</dbReference>
<dbReference type="GO" id="GO:0006412">
    <property type="term" value="P:translation"/>
    <property type="evidence" value="ECO:0007669"/>
    <property type="project" value="UniProtKB-UniRule"/>
</dbReference>
<dbReference type="FunFam" id="2.40.30.10:FF:000004">
    <property type="entry name" value="50S ribosomal protein L3"/>
    <property type="match status" value="1"/>
</dbReference>
<dbReference type="FunFam" id="3.30.160.810:FF:000001">
    <property type="entry name" value="50S ribosomal protein L3"/>
    <property type="match status" value="1"/>
</dbReference>
<dbReference type="Gene3D" id="3.30.160.810">
    <property type="match status" value="1"/>
</dbReference>
<dbReference type="Gene3D" id="2.40.30.10">
    <property type="entry name" value="Translation factors"/>
    <property type="match status" value="1"/>
</dbReference>
<dbReference type="HAMAP" id="MF_01325_B">
    <property type="entry name" value="Ribosomal_uL3_B"/>
    <property type="match status" value="1"/>
</dbReference>
<dbReference type="InterPro" id="IPR000597">
    <property type="entry name" value="Ribosomal_uL3"/>
</dbReference>
<dbReference type="InterPro" id="IPR019927">
    <property type="entry name" value="Ribosomal_uL3_bac/org-type"/>
</dbReference>
<dbReference type="InterPro" id="IPR019926">
    <property type="entry name" value="Ribosomal_uL3_CS"/>
</dbReference>
<dbReference type="InterPro" id="IPR009000">
    <property type="entry name" value="Transl_B-barrel_sf"/>
</dbReference>
<dbReference type="NCBIfam" id="TIGR03625">
    <property type="entry name" value="L3_bact"/>
    <property type="match status" value="1"/>
</dbReference>
<dbReference type="PANTHER" id="PTHR11229">
    <property type="entry name" value="50S RIBOSOMAL PROTEIN L3"/>
    <property type="match status" value="1"/>
</dbReference>
<dbReference type="PANTHER" id="PTHR11229:SF16">
    <property type="entry name" value="LARGE RIBOSOMAL SUBUNIT PROTEIN UL3C"/>
    <property type="match status" value="1"/>
</dbReference>
<dbReference type="Pfam" id="PF00297">
    <property type="entry name" value="Ribosomal_L3"/>
    <property type="match status" value="1"/>
</dbReference>
<dbReference type="SUPFAM" id="SSF50447">
    <property type="entry name" value="Translation proteins"/>
    <property type="match status" value="1"/>
</dbReference>
<dbReference type="PROSITE" id="PS00474">
    <property type="entry name" value="RIBOSOMAL_L3"/>
    <property type="match status" value="1"/>
</dbReference>
<sequence>MTIGVVGRKCGMTRIFTEEGVSIPVTVIEVEPNRVTQFKTEETDGYRAVQVTAGERRASRVTKAQAGHFAKANVAAGRGVWEFRLGEEQYAAGDQITVDLFQAGQMVDVTGESKGKGFAGTIKRWNFRGQDNTHGNSVSHRVPGSIGQCQTPGRVFKGKKMSGHLGAERVTVQSLEIVRVDAERNLLLVKGAVPGATGGDVIVRPAAKARG</sequence>
<name>RL3_PSEP7</name>
<reference key="1">
    <citation type="submission" date="2007-06" db="EMBL/GenBank/DDBJ databases">
        <authorList>
            <person name="Dodson R.J."/>
            <person name="Harkins D."/>
            <person name="Paulsen I.T."/>
        </authorList>
    </citation>
    <scope>NUCLEOTIDE SEQUENCE [LARGE SCALE GENOMIC DNA]</scope>
    <source>
        <strain>DSM 24068 / PA7</strain>
    </source>
</reference>
<evidence type="ECO:0000255" key="1">
    <source>
        <dbReference type="HAMAP-Rule" id="MF_01325"/>
    </source>
</evidence>
<evidence type="ECO:0000305" key="2"/>
<keyword id="KW-0488">Methylation</keyword>
<keyword id="KW-0687">Ribonucleoprotein</keyword>
<keyword id="KW-0689">Ribosomal protein</keyword>
<keyword id="KW-0694">RNA-binding</keyword>
<keyword id="KW-0699">rRNA-binding</keyword>
<proteinExistence type="inferred from homology"/>
<accession>A6UZI8</accession>